<dbReference type="EC" id="2.1.2.1" evidence="1"/>
<dbReference type="EMBL" id="CP000771">
    <property type="protein sequence ID" value="ABS59952.1"/>
    <property type="molecule type" value="Genomic_DNA"/>
</dbReference>
<dbReference type="RefSeq" id="WP_011993275.1">
    <property type="nucleotide sequence ID" value="NC_009718.1"/>
</dbReference>
<dbReference type="SMR" id="A7HJ69"/>
<dbReference type="STRING" id="381764.Fnod_0085"/>
<dbReference type="KEGG" id="fno:Fnod_0085"/>
<dbReference type="eggNOG" id="COG0112">
    <property type="taxonomic scope" value="Bacteria"/>
</dbReference>
<dbReference type="HOGENOM" id="CLU_022477_2_1_0"/>
<dbReference type="OrthoDB" id="9803846at2"/>
<dbReference type="UniPathway" id="UPA00193"/>
<dbReference type="UniPathway" id="UPA00288">
    <property type="reaction ID" value="UER01023"/>
</dbReference>
<dbReference type="Proteomes" id="UP000002415">
    <property type="component" value="Chromosome"/>
</dbReference>
<dbReference type="GO" id="GO:0005829">
    <property type="term" value="C:cytosol"/>
    <property type="evidence" value="ECO:0007669"/>
    <property type="project" value="TreeGrafter"/>
</dbReference>
<dbReference type="GO" id="GO:0004372">
    <property type="term" value="F:glycine hydroxymethyltransferase activity"/>
    <property type="evidence" value="ECO:0007669"/>
    <property type="project" value="UniProtKB-UniRule"/>
</dbReference>
<dbReference type="GO" id="GO:0030170">
    <property type="term" value="F:pyridoxal phosphate binding"/>
    <property type="evidence" value="ECO:0007669"/>
    <property type="project" value="UniProtKB-UniRule"/>
</dbReference>
<dbReference type="GO" id="GO:0019264">
    <property type="term" value="P:glycine biosynthetic process from serine"/>
    <property type="evidence" value="ECO:0007669"/>
    <property type="project" value="UniProtKB-UniRule"/>
</dbReference>
<dbReference type="GO" id="GO:0035999">
    <property type="term" value="P:tetrahydrofolate interconversion"/>
    <property type="evidence" value="ECO:0007669"/>
    <property type="project" value="UniProtKB-UniRule"/>
</dbReference>
<dbReference type="CDD" id="cd00378">
    <property type="entry name" value="SHMT"/>
    <property type="match status" value="1"/>
</dbReference>
<dbReference type="FunFam" id="3.40.640.10:FF:000001">
    <property type="entry name" value="Serine hydroxymethyltransferase"/>
    <property type="match status" value="1"/>
</dbReference>
<dbReference type="FunFam" id="3.90.1150.10:FF:000003">
    <property type="entry name" value="Serine hydroxymethyltransferase"/>
    <property type="match status" value="1"/>
</dbReference>
<dbReference type="Gene3D" id="3.90.1150.10">
    <property type="entry name" value="Aspartate Aminotransferase, domain 1"/>
    <property type="match status" value="1"/>
</dbReference>
<dbReference type="Gene3D" id="3.40.640.10">
    <property type="entry name" value="Type I PLP-dependent aspartate aminotransferase-like (Major domain)"/>
    <property type="match status" value="1"/>
</dbReference>
<dbReference type="HAMAP" id="MF_00051">
    <property type="entry name" value="SHMT"/>
    <property type="match status" value="1"/>
</dbReference>
<dbReference type="InterPro" id="IPR015424">
    <property type="entry name" value="PyrdxlP-dep_Trfase"/>
</dbReference>
<dbReference type="InterPro" id="IPR015421">
    <property type="entry name" value="PyrdxlP-dep_Trfase_major"/>
</dbReference>
<dbReference type="InterPro" id="IPR015422">
    <property type="entry name" value="PyrdxlP-dep_Trfase_small"/>
</dbReference>
<dbReference type="InterPro" id="IPR001085">
    <property type="entry name" value="Ser_HO-MeTrfase"/>
</dbReference>
<dbReference type="InterPro" id="IPR049943">
    <property type="entry name" value="Ser_HO-MeTrfase-like"/>
</dbReference>
<dbReference type="InterPro" id="IPR019798">
    <property type="entry name" value="Ser_HO-MeTrfase_PLP_BS"/>
</dbReference>
<dbReference type="InterPro" id="IPR039429">
    <property type="entry name" value="SHMT-like_dom"/>
</dbReference>
<dbReference type="NCBIfam" id="NF000586">
    <property type="entry name" value="PRK00011.1"/>
    <property type="match status" value="1"/>
</dbReference>
<dbReference type="PANTHER" id="PTHR11680">
    <property type="entry name" value="SERINE HYDROXYMETHYLTRANSFERASE"/>
    <property type="match status" value="1"/>
</dbReference>
<dbReference type="PANTHER" id="PTHR11680:SF35">
    <property type="entry name" value="SERINE HYDROXYMETHYLTRANSFERASE 1"/>
    <property type="match status" value="1"/>
</dbReference>
<dbReference type="Pfam" id="PF00464">
    <property type="entry name" value="SHMT"/>
    <property type="match status" value="1"/>
</dbReference>
<dbReference type="PIRSF" id="PIRSF000412">
    <property type="entry name" value="SHMT"/>
    <property type="match status" value="1"/>
</dbReference>
<dbReference type="SUPFAM" id="SSF53383">
    <property type="entry name" value="PLP-dependent transferases"/>
    <property type="match status" value="1"/>
</dbReference>
<dbReference type="PROSITE" id="PS00096">
    <property type="entry name" value="SHMT"/>
    <property type="match status" value="1"/>
</dbReference>
<organism>
    <name type="scientific">Fervidobacterium nodosum (strain ATCC 35602 / DSM 5306 / Rt17-B1)</name>
    <dbReference type="NCBI Taxonomy" id="381764"/>
    <lineage>
        <taxon>Bacteria</taxon>
        <taxon>Thermotogati</taxon>
        <taxon>Thermotogota</taxon>
        <taxon>Thermotogae</taxon>
        <taxon>Thermotogales</taxon>
        <taxon>Fervidobacteriaceae</taxon>
        <taxon>Fervidobacterium</taxon>
    </lineage>
</organism>
<gene>
    <name evidence="1" type="primary">glyA</name>
    <name type="ordered locus">Fnod_0085</name>
</gene>
<accession>A7HJ69</accession>
<evidence type="ECO:0000255" key="1">
    <source>
        <dbReference type="HAMAP-Rule" id="MF_00051"/>
    </source>
</evidence>
<comment type="function">
    <text evidence="1">Catalyzes the reversible interconversion of serine and glycine with tetrahydrofolate (THF) serving as the one-carbon carrier. This reaction serves as the major source of one-carbon groups required for the biosynthesis of purines, thymidylate, methionine, and other important biomolecules. Also exhibits THF-independent aldolase activity toward beta-hydroxyamino acids, producing glycine and aldehydes, via a retro-aldol mechanism.</text>
</comment>
<comment type="catalytic activity">
    <reaction evidence="1">
        <text>(6R)-5,10-methylene-5,6,7,8-tetrahydrofolate + glycine + H2O = (6S)-5,6,7,8-tetrahydrofolate + L-serine</text>
        <dbReference type="Rhea" id="RHEA:15481"/>
        <dbReference type="ChEBI" id="CHEBI:15377"/>
        <dbReference type="ChEBI" id="CHEBI:15636"/>
        <dbReference type="ChEBI" id="CHEBI:33384"/>
        <dbReference type="ChEBI" id="CHEBI:57305"/>
        <dbReference type="ChEBI" id="CHEBI:57453"/>
        <dbReference type="EC" id="2.1.2.1"/>
    </reaction>
</comment>
<comment type="cofactor">
    <cofactor evidence="1">
        <name>pyridoxal 5'-phosphate</name>
        <dbReference type="ChEBI" id="CHEBI:597326"/>
    </cofactor>
</comment>
<comment type="pathway">
    <text evidence="1">One-carbon metabolism; tetrahydrofolate interconversion.</text>
</comment>
<comment type="pathway">
    <text evidence="1">Amino-acid biosynthesis; glycine biosynthesis; glycine from L-serine: step 1/1.</text>
</comment>
<comment type="subunit">
    <text evidence="1">Homodimer.</text>
</comment>
<comment type="subcellular location">
    <subcellularLocation>
        <location evidence="1">Cytoplasm</location>
    </subcellularLocation>
</comment>
<comment type="similarity">
    <text evidence="1">Belongs to the SHMT family.</text>
</comment>
<proteinExistence type="inferred from homology"/>
<name>GLYA_FERNB</name>
<keyword id="KW-0028">Amino-acid biosynthesis</keyword>
<keyword id="KW-0963">Cytoplasm</keyword>
<keyword id="KW-0554">One-carbon metabolism</keyword>
<keyword id="KW-0663">Pyridoxal phosphate</keyword>
<keyword id="KW-1185">Reference proteome</keyword>
<keyword id="KW-0808">Transferase</keyword>
<sequence>MWEFVKQTDPEIYEVIMKEWERQEYGLELIASENFVSPAVMEAMGSVLTNKYAEGYPKKRYYGGCEWVDVAENLARERAKKLFNAKYANVQPHSGSQANMGAYFALAEPGSTLMGMSLSHGGHLTHGASVNFSGQIYKVVQYGVNPQTETIDYDEVRKLALEHKPKIIVAGGSAYSRIIDFKKFREIADEVGAYLVVDMAHFAGLVAAGIYPNPLEYAHVVTSTTHKTLRGPRGGLILTNDEEIYKAINKAIFPGIQGGPLMHVIAAKAVCFKEALSDEFKAYQNQIVKNAKALAKALENRGLRIVSGGTDTHLMLVDLNPLNVTGKAAETALGYCHITVNKNTIPNETRSPFVASGIRLGTPALTTRGMKEEQMEEIADLIVTVLKNVKDEEGNVDEEVAKRVSDRVIELCKQFPLYVGKI</sequence>
<reference key="1">
    <citation type="submission" date="2007-07" db="EMBL/GenBank/DDBJ databases">
        <title>Complete sequence of Fervidobacterium nodosum Rt17-B1.</title>
        <authorList>
            <consortium name="US DOE Joint Genome Institute"/>
            <person name="Copeland A."/>
            <person name="Lucas S."/>
            <person name="Lapidus A."/>
            <person name="Barry K."/>
            <person name="Glavina del Rio T."/>
            <person name="Dalin E."/>
            <person name="Tice H."/>
            <person name="Pitluck S."/>
            <person name="Saunders E."/>
            <person name="Brettin T."/>
            <person name="Bruce D."/>
            <person name="Detter J.C."/>
            <person name="Han C."/>
            <person name="Schmutz J."/>
            <person name="Larimer F."/>
            <person name="Land M."/>
            <person name="Hauser L."/>
            <person name="Kyrpides N."/>
            <person name="Mikhailova N."/>
            <person name="Nelson K."/>
            <person name="Gogarten J.P."/>
            <person name="Noll K."/>
            <person name="Richardson P."/>
        </authorList>
    </citation>
    <scope>NUCLEOTIDE SEQUENCE [LARGE SCALE GENOMIC DNA]</scope>
    <source>
        <strain>ATCC 35602 / DSM 5306 / Rt17-B1</strain>
    </source>
</reference>
<feature type="chain" id="PRO_1000071131" description="Serine hydroxymethyltransferase">
    <location>
        <begin position="1"/>
        <end position="422"/>
    </location>
</feature>
<feature type="binding site" evidence="1">
    <location>
        <position position="118"/>
    </location>
    <ligand>
        <name>(6S)-5,6,7,8-tetrahydrofolate</name>
        <dbReference type="ChEBI" id="CHEBI:57453"/>
    </ligand>
</feature>
<feature type="binding site" evidence="1">
    <location>
        <begin position="122"/>
        <end position="124"/>
    </location>
    <ligand>
        <name>(6S)-5,6,7,8-tetrahydrofolate</name>
        <dbReference type="ChEBI" id="CHEBI:57453"/>
    </ligand>
</feature>
<feature type="binding site" evidence="1">
    <location>
        <position position="243"/>
    </location>
    <ligand>
        <name>(6S)-5,6,7,8-tetrahydrofolate</name>
        <dbReference type="ChEBI" id="CHEBI:57453"/>
    </ligand>
</feature>
<feature type="binding site" evidence="1">
    <location>
        <begin position="351"/>
        <end position="353"/>
    </location>
    <ligand>
        <name>(6S)-5,6,7,8-tetrahydrofolate</name>
        <dbReference type="ChEBI" id="CHEBI:57453"/>
    </ligand>
</feature>
<feature type="site" description="Plays an important role in substrate specificity" evidence="1">
    <location>
        <position position="226"/>
    </location>
</feature>
<feature type="modified residue" description="N6-(pyridoxal phosphate)lysine" evidence="1">
    <location>
        <position position="227"/>
    </location>
</feature>
<protein>
    <recommendedName>
        <fullName evidence="1">Serine hydroxymethyltransferase</fullName>
        <shortName evidence="1">SHMT</shortName>
        <shortName evidence="1">Serine methylase</shortName>
        <ecNumber evidence="1">2.1.2.1</ecNumber>
    </recommendedName>
</protein>